<protein>
    <recommendedName>
        <fullName evidence="1">Chaperone protein DnaJ</fullName>
    </recommendedName>
</protein>
<dbReference type="EMBL" id="AE016879">
    <property type="protein sequence ID" value="AAP28247.1"/>
    <property type="molecule type" value="Genomic_DNA"/>
</dbReference>
<dbReference type="EMBL" id="AE017334">
    <property type="protein sequence ID" value="AAT33659.1"/>
    <property type="molecule type" value="Genomic_DNA"/>
</dbReference>
<dbReference type="EMBL" id="AE017225">
    <property type="protein sequence ID" value="AAT56511.1"/>
    <property type="molecule type" value="Genomic_DNA"/>
</dbReference>
<dbReference type="RefSeq" id="NP_846761.1">
    <property type="nucleotide sequence ID" value="NC_003997.3"/>
</dbReference>
<dbReference type="RefSeq" id="WP_000043938.1">
    <property type="nucleotide sequence ID" value="NZ_WXXJ01000027.1"/>
</dbReference>
<dbReference type="RefSeq" id="YP_030460.1">
    <property type="nucleotide sequence ID" value="NC_005945.1"/>
</dbReference>
<dbReference type="SMR" id="Q81LS3"/>
<dbReference type="STRING" id="261594.GBAA_4538"/>
<dbReference type="DNASU" id="1088271"/>
<dbReference type="GeneID" id="45024190"/>
<dbReference type="KEGG" id="ban:BA_4538"/>
<dbReference type="KEGG" id="banh:HYU01_22140"/>
<dbReference type="KEGG" id="bar:GBAA_4538"/>
<dbReference type="KEGG" id="bat:BAS4212"/>
<dbReference type="PATRIC" id="fig|198094.11.peg.4506"/>
<dbReference type="eggNOG" id="COG0484">
    <property type="taxonomic scope" value="Bacteria"/>
</dbReference>
<dbReference type="HOGENOM" id="CLU_017633_0_7_9"/>
<dbReference type="OMA" id="MATDYYA"/>
<dbReference type="OrthoDB" id="9779889at2"/>
<dbReference type="Proteomes" id="UP000000427">
    <property type="component" value="Chromosome"/>
</dbReference>
<dbReference type="Proteomes" id="UP000000594">
    <property type="component" value="Chromosome"/>
</dbReference>
<dbReference type="GO" id="GO:0005737">
    <property type="term" value="C:cytoplasm"/>
    <property type="evidence" value="ECO:0007669"/>
    <property type="project" value="UniProtKB-SubCell"/>
</dbReference>
<dbReference type="GO" id="GO:0005524">
    <property type="term" value="F:ATP binding"/>
    <property type="evidence" value="ECO:0007669"/>
    <property type="project" value="InterPro"/>
</dbReference>
<dbReference type="GO" id="GO:0031072">
    <property type="term" value="F:heat shock protein binding"/>
    <property type="evidence" value="ECO:0007669"/>
    <property type="project" value="InterPro"/>
</dbReference>
<dbReference type="GO" id="GO:0051082">
    <property type="term" value="F:unfolded protein binding"/>
    <property type="evidence" value="ECO:0007669"/>
    <property type="project" value="UniProtKB-UniRule"/>
</dbReference>
<dbReference type="GO" id="GO:0008270">
    <property type="term" value="F:zinc ion binding"/>
    <property type="evidence" value="ECO:0007669"/>
    <property type="project" value="UniProtKB-UniRule"/>
</dbReference>
<dbReference type="GO" id="GO:0051085">
    <property type="term" value="P:chaperone cofactor-dependent protein refolding"/>
    <property type="evidence" value="ECO:0007669"/>
    <property type="project" value="TreeGrafter"/>
</dbReference>
<dbReference type="GO" id="GO:0006260">
    <property type="term" value="P:DNA replication"/>
    <property type="evidence" value="ECO:0007669"/>
    <property type="project" value="UniProtKB-KW"/>
</dbReference>
<dbReference type="GO" id="GO:0042026">
    <property type="term" value="P:protein refolding"/>
    <property type="evidence" value="ECO:0007669"/>
    <property type="project" value="TreeGrafter"/>
</dbReference>
<dbReference type="GO" id="GO:0009408">
    <property type="term" value="P:response to heat"/>
    <property type="evidence" value="ECO:0007669"/>
    <property type="project" value="InterPro"/>
</dbReference>
<dbReference type="CDD" id="cd06257">
    <property type="entry name" value="DnaJ"/>
    <property type="match status" value="1"/>
</dbReference>
<dbReference type="CDD" id="cd10747">
    <property type="entry name" value="DnaJ_C"/>
    <property type="match status" value="1"/>
</dbReference>
<dbReference type="CDD" id="cd10719">
    <property type="entry name" value="DnaJ_zf"/>
    <property type="match status" value="1"/>
</dbReference>
<dbReference type="FunFam" id="1.10.287.110:FF:000031">
    <property type="entry name" value="Molecular chaperone DnaJ"/>
    <property type="match status" value="1"/>
</dbReference>
<dbReference type="FunFam" id="2.60.260.20:FF:000004">
    <property type="entry name" value="Molecular chaperone DnaJ"/>
    <property type="match status" value="1"/>
</dbReference>
<dbReference type="FunFam" id="2.60.260.20:FF:000009">
    <property type="entry name" value="Putative Mitochondrial DnaJ chaperone"/>
    <property type="match status" value="1"/>
</dbReference>
<dbReference type="Gene3D" id="6.20.20.10">
    <property type="match status" value="2"/>
</dbReference>
<dbReference type="Gene3D" id="1.10.287.110">
    <property type="entry name" value="DnaJ domain"/>
    <property type="match status" value="1"/>
</dbReference>
<dbReference type="Gene3D" id="2.60.260.20">
    <property type="entry name" value="Urease metallochaperone UreE, N-terminal domain"/>
    <property type="match status" value="2"/>
</dbReference>
<dbReference type="HAMAP" id="MF_01152">
    <property type="entry name" value="DnaJ"/>
    <property type="match status" value="1"/>
</dbReference>
<dbReference type="InterPro" id="IPR012724">
    <property type="entry name" value="DnaJ"/>
</dbReference>
<dbReference type="InterPro" id="IPR002939">
    <property type="entry name" value="DnaJ_C"/>
</dbReference>
<dbReference type="InterPro" id="IPR001623">
    <property type="entry name" value="DnaJ_domain"/>
</dbReference>
<dbReference type="InterPro" id="IPR018253">
    <property type="entry name" value="DnaJ_domain_CS"/>
</dbReference>
<dbReference type="InterPro" id="IPR008971">
    <property type="entry name" value="HSP40/DnaJ_pept-bd"/>
</dbReference>
<dbReference type="InterPro" id="IPR001305">
    <property type="entry name" value="HSP_DnaJ_Cys-rich_dom"/>
</dbReference>
<dbReference type="InterPro" id="IPR036410">
    <property type="entry name" value="HSP_DnaJ_Cys-rich_dom_sf"/>
</dbReference>
<dbReference type="InterPro" id="IPR036869">
    <property type="entry name" value="J_dom_sf"/>
</dbReference>
<dbReference type="NCBIfam" id="TIGR02349">
    <property type="entry name" value="DnaJ_bact"/>
    <property type="match status" value="1"/>
</dbReference>
<dbReference type="NCBIfam" id="NF008035">
    <property type="entry name" value="PRK10767.1"/>
    <property type="match status" value="1"/>
</dbReference>
<dbReference type="NCBIfam" id="NF010873">
    <property type="entry name" value="PRK14280.1"/>
    <property type="match status" value="1"/>
</dbReference>
<dbReference type="PANTHER" id="PTHR43096:SF48">
    <property type="entry name" value="CHAPERONE PROTEIN DNAJ"/>
    <property type="match status" value="1"/>
</dbReference>
<dbReference type="PANTHER" id="PTHR43096">
    <property type="entry name" value="DNAJ HOMOLOG 1, MITOCHONDRIAL-RELATED"/>
    <property type="match status" value="1"/>
</dbReference>
<dbReference type="Pfam" id="PF00226">
    <property type="entry name" value="DnaJ"/>
    <property type="match status" value="1"/>
</dbReference>
<dbReference type="Pfam" id="PF01556">
    <property type="entry name" value="DnaJ_C"/>
    <property type="match status" value="1"/>
</dbReference>
<dbReference type="Pfam" id="PF00684">
    <property type="entry name" value="DnaJ_CXXCXGXG"/>
    <property type="match status" value="1"/>
</dbReference>
<dbReference type="PRINTS" id="PR00625">
    <property type="entry name" value="JDOMAIN"/>
</dbReference>
<dbReference type="SMART" id="SM00271">
    <property type="entry name" value="DnaJ"/>
    <property type="match status" value="1"/>
</dbReference>
<dbReference type="SUPFAM" id="SSF46565">
    <property type="entry name" value="Chaperone J-domain"/>
    <property type="match status" value="1"/>
</dbReference>
<dbReference type="SUPFAM" id="SSF57938">
    <property type="entry name" value="DnaJ/Hsp40 cysteine-rich domain"/>
    <property type="match status" value="1"/>
</dbReference>
<dbReference type="SUPFAM" id="SSF49493">
    <property type="entry name" value="HSP40/DnaJ peptide-binding domain"/>
    <property type="match status" value="2"/>
</dbReference>
<dbReference type="PROSITE" id="PS00636">
    <property type="entry name" value="DNAJ_1"/>
    <property type="match status" value="1"/>
</dbReference>
<dbReference type="PROSITE" id="PS50076">
    <property type="entry name" value="DNAJ_2"/>
    <property type="match status" value="1"/>
</dbReference>
<dbReference type="PROSITE" id="PS51188">
    <property type="entry name" value="ZF_CR"/>
    <property type="match status" value="1"/>
</dbReference>
<proteinExistence type="inferred from homology"/>
<evidence type="ECO:0000255" key="1">
    <source>
        <dbReference type="HAMAP-Rule" id="MF_01152"/>
    </source>
</evidence>
<accession>Q81LS3</accession>
<accession>Q6HT78</accession>
<accession>Q6KMG8</accession>
<name>DNAJ_BACAN</name>
<sequence>MSKRDYYEVLGLSKGASKDEIKKAYRRLAKKYHPDVSKEENAIEKFKEVQEAYEVLSDDQKRAQYDQFGHAGANQGFGGFGGGGDFGGGFGFEDIFSSFFGGGGGRRRDPNAPRQGADLQYQVTLEFEEAIFGKELNVEIPVEDPCDTCKGSGAKPGTSKETCKHCSGSGQVSVEQNTPFGRIVNRQACSHCSGTGQMIKEKCTTCHGSGKVRKRKKINVKIPAGIDNGQQIRVSGKGEAGVNGGPAGDLYVVVHVRSHEFFEREGDHIICEMPLTFAQMALGAEVEVPTVHGKVKLKIPAGTQTGTEFRLKGKGAPNVRGYGQGDQYVVVRVVVPTKLTSHQKDLLREFAGQEEQDDSLFGKLKRAFKGE</sequence>
<reference key="1">
    <citation type="journal article" date="2003" name="Nature">
        <title>The genome sequence of Bacillus anthracis Ames and comparison to closely related bacteria.</title>
        <authorList>
            <person name="Read T.D."/>
            <person name="Peterson S.N."/>
            <person name="Tourasse N.J."/>
            <person name="Baillie L.W."/>
            <person name="Paulsen I.T."/>
            <person name="Nelson K.E."/>
            <person name="Tettelin H."/>
            <person name="Fouts D.E."/>
            <person name="Eisen J.A."/>
            <person name="Gill S.R."/>
            <person name="Holtzapple E.K."/>
            <person name="Okstad O.A."/>
            <person name="Helgason E."/>
            <person name="Rilstone J."/>
            <person name="Wu M."/>
            <person name="Kolonay J.F."/>
            <person name="Beanan M.J."/>
            <person name="Dodson R.J."/>
            <person name="Brinkac L.M."/>
            <person name="Gwinn M.L."/>
            <person name="DeBoy R.T."/>
            <person name="Madpu R."/>
            <person name="Daugherty S.C."/>
            <person name="Durkin A.S."/>
            <person name="Haft D.H."/>
            <person name="Nelson W.C."/>
            <person name="Peterson J.D."/>
            <person name="Pop M."/>
            <person name="Khouri H.M."/>
            <person name="Radune D."/>
            <person name="Benton J.L."/>
            <person name="Mahamoud Y."/>
            <person name="Jiang L."/>
            <person name="Hance I.R."/>
            <person name="Weidman J.F."/>
            <person name="Berry K.J."/>
            <person name="Plaut R.D."/>
            <person name="Wolf A.M."/>
            <person name="Watkins K.L."/>
            <person name="Nierman W.C."/>
            <person name="Hazen A."/>
            <person name="Cline R.T."/>
            <person name="Redmond C."/>
            <person name="Thwaite J.E."/>
            <person name="White O."/>
            <person name="Salzberg S.L."/>
            <person name="Thomason B."/>
            <person name="Friedlander A.M."/>
            <person name="Koehler T.M."/>
            <person name="Hanna P.C."/>
            <person name="Kolstoe A.-B."/>
            <person name="Fraser C.M."/>
        </authorList>
    </citation>
    <scope>NUCLEOTIDE SEQUENCE [LARGE SCALE GENOMIC DNA]</scope>
    <source>
        <strain>Ames / isolate Porton</strain>
    </source>
</reference>
<reference key="2">
    <citation type="journal article" date="2009" name="J. Bacteriol.">
        <title>The complete genome sequence of Bacillus anthracis Ames 'Ancestor'.</title>
        <authorList>
            <person name="Ravel J."/>
            <person name="Jiang L."/>
            <person name="Stanley S.T."/>
            <person name="Wilson M.R."/>
            <person name="Decker R.S."/>
            <person name="Read T.D."/>
            <person name="Worsham P."/>
            <person name="Keim P.S."/>
            <person name="Salzberg S.L."/>
            <person name="Fraser-Liggett C.M."/>
            <person name="Rasko D.A."/>
        </authorList>
    </citation>
    <scope>NUCLEOTIDE SEQUENCE [LARGE SCALE GENOMIC DNA]</scope>
    <source>
        <strain>Ames ancestor</strain>
    </source>
</reference>
<reference key="3">
    <citation type="submission" date="2004-01" db="EMBL/GenBank/DDBJ databases">
        <title>Complete genome sequence of Bacillus anthracis Sterne.</title>
        <authorList>
            <person name="Brettin T.S."/>
            <person name="Bruce D."/>
            <person name="Challacombe J.F."/>
            <person name="Gilna P."/>
            <person name="Han C."/>
            <person name="Hill K."/>
            <person name="Hitchcock P."/>
            <person name="Jackson P."/>
            <person name="Keim P."/>
            <person name="Longmire J."/>
            <person name="Lucas S."/>
            <person name="Okinaka R."/>
            <person name="Richardson P."/>
            <person name="Rubin E."/>
            <person name="Tice H."/>
        </authorList>
    </citation>
    <scope>NUCLEOTIDE SEQUENCE [LARGE SCALE GENOMIC DNA]</scope>
    <source>
        <strain>Sterne</strain>
    </source>
</reference>
<keyword id="KW-0143">Chaperone</keyword>
<keyword id="KW-0963">Cytoplasm</keyword>
<keyword id="KW-0235">DNA replication</keyword>
<keyword id="KW-0479">Metal-binding</keyword>
<keyword id="KW-1185">Reference proteome</keyword>
<keyword id="KW-0677">Repeat</keyword>
<keyword id="KW-0346">Stress response</keyword>
<keyword id="KW-0862">Zinc</keyword>
<keyword id="KW-0863">Zinc-finger</keyword>
<organism>
    <name type="scientific">Bacillus anthracis</name>
    <dbReference type="NCBI Taxonomy" id="1392"/>
    <lineage>
        <taxon>Bacteria</taxon>
        <taxon>Bacillati</taxon>
        <taxon>Bacillota</taxon>
        <taxon>Bacilli</taxon>
        <taxon>Bacillales</taxon>
        <taxon>Bacillaceae</taxon>
        <taxon>Bacillus</taxon>
        <taxon>Bacillus cereus group</taxon>
    </lineage>
</organism>
<feature type="chain" id="PRO_0000070715" description="Chaperone protein DnaJ">
    <location>
        <begin position="1"/>
        <end position="371"/>
    </location>
</feature>
<feature type="domain" description="J" evidence="1">
    <location>
        <begin position="5"/>
        <end position="69"/>
    </location>
</feature>
<feature type="repeat" description="CXXCXGXG motif">
    <location>
        <begin position="146"/>
        <end position="153"/>
    </location>
</feature>
<feature type="repeat" description="CXXCXGXG motif">
    <location>
        <begin position="163"/>
        <end position="170"/>
    </location>
</feature>
<feature type="repeat" description="CXXCXGXG motif">
    <location>
        <begin position="189"/>
        <end position="196"/>
    </location>
</feature>
<feature type="repeat" description="CXXCXGXG motif">
    <location>
        <begin position="203"/>
        <end position="210"/>
    </location>
</feature>
<feature type="zinc finger region" description="CR-type" evidence="1">
    <location>
        <begin position="133"/>
        <end position="215"/>
    </location>
</feature>
<feature type="binding site" evidence="1">
    <location>
        <position position="146"/>
    </location>
    <ligand>
        <name>Zn(2+)</name>
        <dbReference type="ChEBI" id="CHEBI:29105"/>
        <label>1</label>
    </ligand>
</feature>
<feature type="binding site" evidence="1">
    <location>
        <position position="149"/>
    </location>
    <ligand>
        <name>Zn(2+)</name>
        <dbReference type="ChEBI" id="CHEBI:29105"/>
        <label>1</label>
    </ligand>
</feature>
<feature type="binding site" evidence="1">
    <location>
        <position position="163"/>
    </location>
    <ligand>
        <name>Zn(2+)</name>
        <dbReference type="ChEBI" id="CHEBI:29105"/>
        <label>2</label>
    </ligand>
</feature>
<feature type="binding site" evidence="1">
    <location>
        <position position="166"/>
    </location>
    <ligand>
        <name>Zn(2+)</name>
        <dbReference type="ChEBI" id="CHEBI:29105"/>
        <label>2</label>
    </ligand>
</feature>
<feature type="binding site" evidence="1">
    <location>
        <position position="189"/>
    </location>
    <ligand>
        <name>Zn(2+)</name>
        <dbReference type="ChEBI" id="CHEBI:29105"/>
        <label>2</label>
    </ligand>
</feature>
<feature type="binding site" evidence="1">
    <location>
        <position position="192"/>
    </location>
    <ligand>
        <name>Zn(2+)</name>
        <dbReference type="ChEBI" id="CHEBI:29105"/>
        <label>2</label>
    </ligand>
</feature>
<feature type="binding site" evidence="1">
    <location>
        <position position="203"/>
    </location>
    <ligand>
        <name>Zn(2+)</name>
        <dbReference type="ChEBI" id="CHEBI:29105"/>
        <label>1</label>
    </ligand>
</feature>
<feature type="binding site" evidence="1">
    <location>
        <position position="206"/>
    </location>
    <ligand>
        <name>Zn(2+)</name>
        <dbReference type="ChEBI" id="CHEBI:29105"/>
        <label>1</label>
    </ligand>
</feature>
<gene>
    <name evidence="1" type="primary">dnaJ</name>
    <name type="ordered locus">BA_4538</name>
    <name type="ordered locus">GBAA_4538</name>
    <name type="ordered locus">BAS4212</name>
</gene>
<comment type="function">
    <text evidence="1">Participates actively in the response to hyperosmotic and heat shock by preventing the aggregation of stress-denatured proteins and by disaggregating proteins, also in an autonomous, DnaK-independent fashion. Unfolded proteins bind initially to DnaJ; upon interaction with the DnaJ-bound protein, DnaK hydrolyzes its bound ATP, resulting in the formation of a stable complex. GrpE releases ADP from DnaK; ATP binding to DnaK triggers the release of the substrate protein, thus completing the reaction cycle. Several rounds of ATP-dependent interactions between DnaJ, DnaK and GrpE are required for fully efficient folding. Also involved, together with DnaK and GrpE, in the DNA replication of plasmids through activation of initiation proteins.</text>
</comment>
<comment type="cofactor">
    <cofactor evidence="1">
        <name>Zn(2+)</name>
        <dbReference type="ChEBI" id="CHEBI:29105"/>
    </cofactor>
    <text evidence="1">Binds 2 Zn(2+) ions per monomer.</text>
</comment>
<comment type="subunit">
    <text evidence="1">Homodimer.</text>
</comment>
<comment type="subcellular location">
    <subcellularLocation>
        <location evidence="1">Cytoplasm</location>
    </subcellularLocation>
</comment>
<comment type="domain">
    <text evidence="1">The J domain is necessary and sufficient to stimulate DnaK ATPase activity. Zinc center 1 plays an important role in the autonomous, DnaK-independent chaperone activity of DnaJ. Zinc center 2 is essential for interaction with DnaK and for DnaJ activity.</text>
</comment>
<comment type="similarity">
    <text evidence="1">Belongs to the DnaJ family.</text>
</comment>